<evidence type="ECO:0000250" key="1"/>
<evidence type="ECO:0000255" key="2"/>
<evidence type="ECO:0000256" key="3">
    <source>
        <dbReference type="SAM" id="MobiDB-lite"/>
    </source>
</evidence>
<evidence type="ECO:0000305" key="4"/>
<gene>
    <name type="primary">EFG1</name>
    <name type="ORF">LELG_03984</name>
</gene>
<name>EFG1P_LODEL</name>
<protein>
    <recommendedName>
        <fullName>rRNA-processing protein EFG1</fullName>
    </recommendedName>
</protein>
<feature type="chain" id="PRO_0000330274" description="rRNA-processing protein EFG1">
    <location>
        <begin position="1"/>
        <end position="235"/>
    </location>
</feature>
<feature type="region of interest" description="Disordered" evidence="3">
    <location>
        <begin position="1"/>
        <end position="31"/>
    </location>
</feature>
<feature type="region of interest" description="Disordered" evidence="3">
    <location>
        <begin position="210"/>
        <end position="235"/>
    </location>
</feature>
<feature type="coiled-coil region" evidence="2">
    <location>
        <begin position="25"/>
        <end position="126"/>
    </location>
</feature>
<feature type="coiled-coil region" evidence="2">
    <location>
        <begin position="162"/>
        <end position="185"/>
    </location>
</feature>
<feature type="compositionally biased region" description="Basic residues" evidence="3">
    <location>
        <begin position="1"/>
        <end position="12"/>
    </location>
</feature>
<feature type="compositionally biased region" description="Basic and acidic residues" evidence="3">
    <location>
        <begin position="210"/>
        <end position="224"/>
    </location>
</feature>
<feature type="compositionally biased region" description="Acidic residues" evidence="3">
    <location>
        <begin position="225"/>
        <end position="235"/>
    </location>
</feature>
<accession>A5E2Z7</accession>
<reference key="1">
    <citation type="journal article" date="2009" name="Nature">
        <title>Evolution of pathogenicity and sexual reproduction in eight Candida genomes.</title>
        <authorList>
            <person name="Butler G."/>
            <person name="Rasmussen M.D."/>
            <person name="Lin M.F."/>
            <person name="Santos M.A.S."/>
            <person name="Sakthikumar S."/>
            <person name="Munro C.A."/>
            <person name="Rheinbay E."/>
            <person name="Grabherr M."/>
            <person name="Forche A."/>
            <person name="Reedy J.L."/>
            <person name="Agrafioti I."/>
            <person name="Arnaud M.B."/>
            <person name="Bates S."/>
            <person name="Brown A.J.P."/>
            <person name="Brunke S."/>
            <person name="Costanzo M.C."/>
            <person name="Fitzpatrick D.A."/>
            <person name="de Groot P.W.J."/>
            <person name="Harris D."/>
            <person name="Hoyer L.L."/>
            <person name="Hube B."/>
            <person name="Klis F.M."/>
            <person name="Kodira C."/>
            <person name="Lennard N."/>
            <person name="Logue M.E."/>
            <person name="Martin R."/>
            <person name="Neiman A.M."/>
            <person name="Nikolaou E."/>
            <person name="Quail M.A."/>
            <person name="Quinn J."/>
            <person name="Santos M.C."/>
            <person name="Schmitzberger F.F."/>
            <person name="Sherlock G."/>
            <person name="Shah P."/>
            <person name="Silverstein K.A.T."/>
            <person name="Skrzypek M.S."/>
            <person name="Soll D."/>
            <person name="Staggs R."/>
            <person name="Stansfield I."/>
            <person name="Stumpf M.P.H."/>
            <person name="Sudbery P.E."/>
            <person name="Srikantha T."/>
            <person name="Zeng Q."/>
            <person name="Berman J."/>
            <person name="Berriman M."/>
            <person name="Heitman J."/>
            <person name="Gow N.A.R."/>
            <person name="Lorenz M.C."/>
            <person name="Birren B.W."/>
            <person name="Kellis M."/>
            <person name="Cuomo C.A."/>
        </authorList>
    </citation>
    <scope>NUCLEOTIDE SEQUENCE [LARGE SCALE GENOMIC DNA]</scope>
    <source>
        <strain>ATCC 11503 / BCRC 21390 / CBS 2605 / JCM 1781 / NBRC 1676 / NRRL YB-4239</strain>
    </source>
</reference>
<organism>
    <name type="scientific">Lodderomyces elongisporus (strain ATCC 11503 / CBS 2605 / JCM 1781 / NBRC 1676 / NRRL YB-4239)</name>
    <name type="common">Yeast</name>
    <name type="synonym">Saccharomyces elongisporus</name>
    <dbReference type="NCBI Taxonomy" id="379508"/>
    <lineage>
        <taxon>Eukaryota</taxon>
        <taxon>Fungi</taxon>
        <taxon>Dikarya</taxon>
        <taxon>Ascomycota</taxon>
        <taxon>Saccharomycotina</taxon>
        <taxon>Pichiomycetes</taxon>
        <taxon>Debaryomycetaceae</taxon>
        <taxon>Candida/Lodderomyces clade</taxon>
        <taxon>Lodderomyces</taxon>
    </lineage>
</organism>
<comment type="function">
    <text evidence="1">Involved in rRNA processing.</text>
</comment>
<comment type="subcellular location">
    <subcellularLocation>
        <location evidence="1">Nucleus</location>
        <location evidence="1">Nucleolus</location>
    </subcellularLocation>
</comment>
<comment type="similarity">
    <text evidence="4">Belongs to the EFG1 family.</text>
</comment>
<keyword id="KW-0175">Coiled coil</keyword>
<keyword id="KW-0539">Nucleus</keyword>
<keyword id="KW-1185">Reference proteome</keyword>
<keyword id="KW-0698">rRNA processing</keyword>
<dbReference type="EMBL" id="CH981528">
    <property type="protein sequence ID" value="EDK45805.1"/>
    <property type="molecule type" value="Genomic_DNA"/>
</dbReference>
<dbReference type="RefSeq" id="XP_001524952.1">
    <property type="nucleotide sequence ID" value="XM_001524902.1"/>
</dbReference>
<dbReference type="SMR" id="A5E2Z7"/>
<dbReference type="FunCoup" id="A5E2Z7">
    <property type="interactions" value="169"/>
</dbReference>
<dbReference type="STRING" id="379508.A5E2Z7"/>
<dbReference type="GeneID" id="5232021"/>
<dbReference type="KEGG" id="lel:PVL30_004804"/>
<dbReference type="VEuPathDB" id="FungiDB:LELG_03984"/>
<dbReference type="eggNOG" id="KOG4484">
    <property type="taxonomic scope" value="Eukaryota"/>
</dbReference>
<dbReference type="HOGENOM" id="CLU_066912_2_0_1"/>
<dbReference type="InParanoid" id="A5E2Z7"/>
<dbReference type="OMA" id="KPHRIQE"/>
<dbReference type="OrthoDB" id="47732at2759"/>
<dbReference type="Proteomes" id="UP000001996">
    <property type="component" value="Unassembled WGS sequence"/>
</dbReference>
<dbReference type="GO" id="GO:0005730">
    <property type="term" value="C:nucleolus"/>
    <property type="evidence" value="ECO:0007669"/>
    <property type="project" value="UniProtKB-SubCell"/>
</dbReference>
<dbReference type="GO" id="GO:0030688">
    <property type="term" value="C:preribosome, small subunit precursor"/>
    <property type="evidence" value="ECO:0007669"/>
    <property type="project" value="TreeGrafter"/>
</dbReference>
<dbReference type="GO" id="GO:0000462">
    <property type="term" value="P:maturation of SSU-rRNA from tricistronic rRNA transcript (SSU-rRNA, 5.8S rRNA, LSU-rRNA)"/>
    <property type="evidence" value="ECO:0007669"/>
    <property type="project" value="TreeGrafter"/>
</dbReference>
<dbReference type="InterPro" id="IPR019310">
    <property type="entry name" value="Efg1"/>
</dbReference>
<dbReference type="InterPro" id="IPR050786">
    <property type="entry name" value="EFG1_rRNA-proc"/>
</dbReference>
<dbReference type="PANTHER" id="PTHR33911">
    <property type="entry name" value="RRNA-PROCESSING PROTEIN EFG1"/>
    <property type="match status" value="1"/>
</dbReference>
<dbReference type="PANTHER" id="PTHR33911:SF1">
    <property type="entry name" value="RRNA-PROCESSING PROTEIN EFG1"/>
    <property type="match status" value="1"/>
</dbReference>
<dbReference type="Pfam" id="PF10153">
    <property type="entry name" value="Efg1"/>
    <property type="match status" value="1"/>
</dbReference>
<sequence length="235" mass="27360">MPKTAKKHHRKSNGPIEVSSAIHTGSSAKLKKKIRDIERALKKHEKLPADKKIEYERALKGLQVELQNSQKNLKEKENASKYHMVRFFERKKATRKLKQLRKQFDEMQNTAEPSKKELKKLRKQVKHGEIDLLYVCLFPKAEKYISLYPSQSAEDINDPNVKAGLRKTEAKRLQFRKEVEKLMDEGKLLFTVDDILAGKKVYHEFYKSSTTEKEIDAPAAKEEGENGEEQDDFFE</sequence>
<proteinExistence type="inferred from homology"/>